<gene>
    <name evidence="1" type="primary">rnhA</name>
    <name type="ordered locus">BAV2934</name>
</gene>
<dbReference type="EC" id="3.1.26.4" evidence="1"/>
<dbReference type="EMBL" id="AM167904">
    <property type="protein sequence ID" value="CAJ50544.1"/>
    <property type="molecule type" value="Genomic_DNA"/>
</dbReference>
<dbReference type="RefSeq" id="WP_012418573.1">
    <property type="nucleotide sequence ID" value="NC_010645.1"/>
</dbReference>
<dbReference type="SMR" id="Q2KV56"/>
<dbReference type="STRING" id="360910.BAV2934"/>
<dbReference type="GeneID" id="92933808"/>
<dbReference type="KEGG" id="bav:BAV2934"/>
<dbReference type="eggNOG" id="COG0328">
    <property type="taxonomic scope" value="Bacteria"/>
</dbReference>
<dbReference type="HOGENOM" id="CLU_030894_6_0_4"/>
<dbReference type="OrthoDB" id="7845843at2"/>
<dbReference type="Proteomes" id="UP000001977">
    <property type="component" value="Chromosome"/>
</dbReference>
<dbReference type="GO" id="GO:0005737">
    <property type="term" value="C:cytoplasm"/>
    <property type="evidence" value="ECO:0007669"/>
    <property type="project" value="UniProtKB-SubCell"/>
</dbReference>
<dbReference type="GO" id="GO:0000287">
    <property type="term" value="F:magnesium ion binding"/>
    <property type="evidence" value="ECO:0007669"/>
    <property type="project" value="UniProtKB-UniRule"/>
</dbReference>
<dbReference type="GO" id="GO:0003676">
    <property type="term" value="F:nucleic acid binding"/>
    <property type="evidence" value="ECO:0007669"/>
    <property type="project" value="InterPro"/>
</dbReference>
<dbReference type="GO" id="GO:0004523">
    <property type="term" value="F:RNA-DNA hybrid ribonuclease activity"/>
    <property type="evidence" value="ECO:0007669"/>
    <property type="project" value="UniProtKB-UniRule"/>
</dbReference>
<dbReference type="GO" id="GO:0043137">
    <property type="term" value="P:DNA replication, removal of RNA primer"/>
    <property type="evidence" value="ECO:0007669"/>
    <property type="project" value="TreeGrafter"/>
</dbReference>
<dbReference type="CDD" id="cd09278">
    <property type="entry name" value="RNase_HI_prokaryote_like"/>
    <property type="match status" value="1"/>
</dbReference>
<dbReference type="FunFam" id="3.30.420.10:FF:000089">
    <property type="entry name" value="Ribonuclease H"/>
    <property type="match status" value="1"/>
</dbReference>
<dbReference type="Gene3D" id="3.30.420.10">
    <property type="entry name" value="Ribonuclease H-like superfamily/Ribonuclease H"/>
    <property type="match status" value="1"/>
</dbReference>
<dbReference type="HAMAP" id="MF_00042">
    <property type="entry name" value="RNase_H"/>
    <property type="match status" value="1"/>
</dbReference>
<dbReference type="InterPro" id="IPR050092">
    <property type="entry name" value="RNase_H"/>
</dbReference>
<dbReference type="InterPro" id="IPR012337">
    <property type="entry name" value="RNaseH-like_sf"/>
</dbReference>
<dbReference type="InterPro" id="IPR002156">
    <property type="entry name" value="RNaseH_domain"/>
</dbReference>
<dbReference type="InterPro" id="IPR036397">
    <property type="entry name" value="RNaseH_sf"/>
</dbReference>
<dbReference type="InterPro" id="IPR022892">
    <property type="entry name" value="RNaseHI"/>
</dbReference>
<dbReference type="NCBIfam" id="NF001236">
    <property type="entry name" value="PRK00203.1"/>
    <property type="match status" value="1"/>
</dbReference>
<dbReference type="PANTHER" id="PTHR10642">
    <property type="entry name" value="RIBONUCLEASE H1"/>
    <property type="match status" value="1"/>
</dbReference>
<dbReference type="PANTHER" id="PTHR10642:SF26">
    <property type="entry name" value="RIBONUCLEASE H1"/>
    <property type="match status" value="1"/>
</dbReference>
<dbReference type="Pfam" id="PF00075">
    <property type="entry name" value="RNase_H"/>
    <property type="match status" value="1"/>
</dbReference>
<dbReference type="SUPFAM" id="SSF53098">
    <property type="entry name" value="Ribonuclease H-like"/>
    <property type="match status" value="1"/>
</dbReference>
<dbReference type="PROSITE" id="PS50879">
    <property type="entry name" value="RNASE_H_1"/>
    <property type="match status" value="1"/>
</dbReference>
<sequence length="153" mass="17086">MSTANPPADLVEMWTDGACKGNPGPGGWGVLMRYGSHEKTFFGGDPQTTNNRMEILAVVEGLRALKRACTVVIHTDSQYVMKGMTEWLPNWKRRGWLTADKKPVKNAELWQLLDAQVARHEVRWQWVRGHNGDPGNEMADMLANQGVASVARN</sequence>
<feature type="chain" id="PRO_0000332564" description="Ribonuclease H">
    <location>
        <begin position="1"/>
        <end position="153"/>
    </location>
</feature>
<feature type="domain" description="RNase H type-1" evidence="2">
    <location>
        <begin position="7"/>
        <end position="148"/>
    </location>
</feature>
<feature type="binding site" evidence="1">
    <location>
        <position position="16"/>
    </location>
    <ligand>
        <name>Mg(2+)</name>
        <dbReference type="ChEBI" id="CHEBI:18420"/>
        <label>1</label>
    </ligand>
</feature>
<feature type="binding site" evidence="1">
    <location>
        <position position="16"/>
    </location>
    <ligand>
        <name>Mg(2+)</name>
        <dbReference type="ChEBI" id="CHEBI:18420"/>
        <label>2</label>
    </ligand>
</feature>
<feature type="binding site" evidence="1">
    <location>
        <position position="54"/>
    </location>
    <ligand>
        <name>Mg(2+)</name>
        <dbReference type="ChEBI" id="CHEBI:18420"/>
        <label>1</label>
    </ligand>
</feature>
<feature type="binding site" evidence="1">
    <location>
        <position position="76"/>
    </location>
    <ligand>
        <name>Mg(2+)</name>
        <dbReference type="ChEBI" id="CHEBI:18420"/>
        <label>1</label>
    </ligand>
</feature>
<feature type="binding site" evidence="1">
    <location>
        <position position="140"/>
    </location>
    <ligand>
        <name>Mg(2+)</name>
        <dbReference type="ChEBI" id="CHEBI:18420"/>
        <label>2</label>
    </ligand>
</feature>
<organism>
    <name type="scientific">Bordetella avium (strain 197N)</name>
    <dbReference type="NCBI Taxonomy" id="360910"/>
    <lineage>
        <taxon>Bacteria</taxon>
        <taxon>Pseudomonadati</taxon>
        <taxon>Pseudomonadota</taxon>
        <taxon>Betaproteobacteria</taxon>
        <taxon>Burkholderiales</taxon>
        <taxon>Alcaligenaceae</taxon>
        <taxon>Bordetella</taxon>
    </lineage>
</organism>
<comment type="function">
    <text evidence="1">Endonuclease that specifically degrades the RNA of RNA-DNA hybrids.</text>
</comment>
<comment type="catalytic activity">
    <reaction evidence="1">
        <text>Endonucleolytic cleavage to 5'-phosphomonoester.</text>
        <dbReference type="EC" id="3.1.26.4"/>
    </reaction>
</comment>
<comment type="cofactor">
    <cofactor evidence="1">
        <name>Mg(2+)</name>
        <dbReference type="ChEBI" id="CHEBI:18420"/>
    </cofactor>
    <text evidence="1">Binds 1 Mg(2+) ion per subunit. May bind a second metal ion at a regulatory site, or after substrate binding.</text>
</comment>
<comment type="subunit">
    <text evidence="1">Monomer.</text>
</comment>
<comment type="subcellular location">
    <subcellularLocation>
        <location evidence="1">Cytoplasm</location>
    </subcellularLocation>
</comment>
<comment type="similarity">
    <text evidence="1">Belongs to the RNase H family.</text>
</comment>
<reference key="1">
    <citation type="journal article" date="2006" name="J. Bacteriol.">
        <title>Comparison of the genome sequence of the poultry pathogen Bordetella avium with those of B. bronchiseptica, B. pertussis, and B. parapertussis reveals extensive diversity in surface structures associated with host interaction.</title>
        <authorList>
            <person name="Sebaihia M."/>
            <person name="Preston A."/>
            <person name="Maskell D.J."/>
            <person name="Kuzmiak H."/>
            <person name="Connell T.D."/>
            <person name="King N.D."/>
            <person name="Orndorff P.E."/>
            <person name="Miyamoto D.M."/>
            <person name="Thomson N.R."/>
            <person name="Harris D."/>
            <person name="Goble A."/>
            <person name="Lord A."/>
            <person name="Murphy L."/>
            <person name="Quail M.A."/>
            <person name="Rutter S."/>
            <person name="Squares R."/>
            <person name="Squares S."/>
            <person name="Woodward J."/>
            <person name="Parkhill J."/>
            <person name="Temple L.M."/>
        </authorList>
    </citation>
    <scope>NUCLEOTIDE SEQUENCE [LARGE SCALE GENOMIC DNA]</scope>
    <source>
        <strain>197N</strain>
    </source>
</reference>
<protein>
    <recommendedName>
        <fullName evidence="1">Ribonuclease H</fullName>
        <shortName evidence="1">RNase H</shortName>
        <ecNumber evidence="1">3.1.26.4</ecNumber>
    </recommendedName>
</protein>
<accession>Q2KV56</accession>
<name>RNH_BORA1</name>
<evidence type="ECO:0000255" key="1">
    <source>
        <dbReference type="HAMAP-Rule" id="MF_00042"/>
    </source>
</evidence>
<evidence type="ECO:0000255" key="2">
    <source>
        <dbReference type="PROSITE-ProRule" id="PRU00408"/>
    </source>
</evidence>
<proteinExistence type="inferred from homology"/>
<keyword id="KW-0963">Cytoplasm</keyword>
<keyword id="KW-0255">Endonuclease</keyword>
<keyword id="KW-0378">Hydrolase</keyword>
<keyword id="KW-0460">Magnesium</keyword>
<keyword id="KW-0479">Metal-binding</keyword>
<keyword id="KW-0540">Nuclease</keyword>
<keyword id="KW-1185">Reference proteome</keyword>